<gene>
    <name type="primary">msuE</name>
    <name type="synonym">slfA</name>
    <name type="ordered locus">PA2357</name>
</gene>
<evidence type="ECO:0000305" key="1"/>
<protein>
    <recommendedName>
        <fullName>FMN reductase (NADPH)</fullName>
        <ecNumber>1.5.1.38</ecNumber>
    </recommendedName>
    <alternativeName>
        <fullName>FMN reductase</fullName>
    </alternativeName>
</protein>
<name>MSUE_PSEAE</name>
<sequence>MTSPFKVVAVSGGTYRPSRTLVLTQALIAELGQSLPIDSRVIELTDIAAPLGATLARNQAPAELQAVLDEIESADLLLVASPVYRGSYPGLLKHLFDLIDLNALIDTPVLLAATGGTERHALVLDHQLRPLFSFFQAITLPIGVYASEADFDNYRIVSEPLKARIRLAAERAAPLFGGRSELLKIA</sequence>
<organism>
    <name type="scientific">Pseudomonas aeruginosa (strain ATCC 15692 / DSM 22644 / CIP 104116 / JCM 14847 / LMG 12228 / 1C / PRS 101 / PAO1)</name>
    <dbReference type="NCBI Taxonomy" id="208964"/>
    <lineage>
        <taxon>Bacteria</taxon>
        <taxon>Pseudomonadati</taxon>
        <taxon>Pseudomonadota</taxon>
        <taxon>Gammaproteobacteria</taxon>
        <taxon>Pseudomonadales</taxon>
        <taxon>Pseudomonadaceae</taxon>
        <taxon>Pseudomonas</taxon>
    </lineage>
</organism>
<comment type="catalytic activity">
    <reaction>
        <text>FMNH2 + NADP(+) = FMN + NADPH + 2 H(+)</text>
        <dbReference type="Rhea" id="RHEA:21624"/>
        <dbReference type="ChEBI" id="CHEBI:15378"/>
        <dbReference type="ChEBI" id="CHEBI:57618"/>
        <dbReference type="ChEBI" id="CHEBI:57783"/>
        <dbReference type="ChEBI" id="CHEBI:58210"/>
        <dbReference type="ChEBI" id="CHEBI:58349"/>
        <dbReference type="EC" id="1.5.1.38"/>
    </reaction>
</comment>
<comment type="similarity">
    <text evidence="1">Belongs to the SsuE family.</text>
</comment>
<accession>O31038</accession>
<feature type="chain" id="PRO_0000160594" description="FMN reductase (NADPH)">
    <location>
        <begin position="1"/>
        <end position="186"/>
    </location>
</feature>
<keyword id="KW-0285">Flavoprotein</keyword>
<keyword id="KW-0288">FMN</keyword>
<keyword id="KW-0521">NADP</keyword>
<keyword id="KW-0560">Oxidoreductase</keyword>
<keyword id="KW-1185">Reference proteome</keyword>
<proteinExistence type="inferred from homology"/>
<dbReference type="EC" id="1.5.1.38"/>
<dbReference type="EMBL" id="AF026067">
    <property type="protein sequence ID" value="AAB82563.1"/>
    <property type="molecule type" value="Genomic_DNA"/>
</dbReference>
<dbReference type="EMBL" id="AE004091">
    <property type="protein sequence ID" value="AAG05745.1"/>
    <property type="molecule type" value="Genomic_DNA"/>
</dbReference>
<dbReference type="PIR" id="F83352">
    <property type="entry name" value="F83352"/>
</dbReference>
<dbReference type="RefSeq" id="NP_251047.1">
    <property type="nucleotide sequence ID" value="NC_002516.2"/>
</dbReference>
<dbReference type="RefSeq" id="WP_003089470.1">
    <property type="nucleotide sequence ID" value="NZ_QZGE01000021.1"/>
</dbReference>
<dbReference type="SMR" id="O31038"/>
<dbReference type="STRING" id="208964.PA2357"/>
<dbReference type="PaxDb" id="208964-PA2357"/>
<dbReference type="DNASU" id="882283"/>
<dbReference type="GeneID" id="882283"/>
<dbReference type="KEGG" id="pae:PA2357"/>
<dbReference type="PATRIC" id="fig|208964.12.peg.2466"/>
<dbReference type="PseudoCAP" id="PA2357"/>
<dbReference type="HOGENOM" id="CLU_055322_3_3_6"/>
<dbReference type="InParanoid" id="O31038"/>
<dbReference type="OrthoDB" id="1643408at2"/>
<dbReference type="PhylomeDB" id="O31038"/>
<dbReference type="BioCyc" id="PAER208964:G1FZ6-2396-MONOMER"/>
<dbReference type="Proteomes" id="UP000002438">
    <property type="component" value="Chromosome"/>
</dbReference>
<dbReference type="GO" id="GO:0052873">
    <property type="term" value="F:FMN reductase (NADPH) activity"/>
    <property type="evidence" value="ECO:0007669"/>
    <property type="project" value="UniProtKB-EC"/>
</dbReference>
<dbReference type="GO" id="GO:0016655">
    <property type="term" value="F:oxidoreductase activity, acting on NAD(P)H, quinone or similar compound as acceptor"/>
    <property type="evidence" value="ECO:0007669"/>
    <property type="project" value="UniProtKB-ARBA"/>
</dbReference>
<dbReference type="Gene3D" id="3.40.50.360">
    <property type="match status" value="1"/>
</dbReference>
<dbReference type="InterPro" id="IPR029039">
    <property type="entry name" value="Flavoprotein-like_sf"/>
</dbReference>
<dbReference type="InterPro" id="IPR005025">
    <property type="entry name" value="FMN_Rdtase-like_dom"/>
</dbReference>
<dbReference type="InterPro" id="IPR019912">
    <property type="entry name" value="FMN_Rdtase_MsuE-like"/>
</dbReference>
<dbReference type="InterPro" id="IPR051814">
    <property type="entry name" value="NAD(P)H-dep_FMN_reductase"/>
</dbReference>
<dbReference type="NCBIfam" id="TIGR03566">
    <property type="entry name" value="FMN_reduc_MsuE"/>
    <property type="match status" value="1"/>
</dbReference>
<dbReference type="PANTHER" id="PTHR43408">
    <property type="entry name" value="FMN REDUCTASE (NADPH)"/>
    <property type="match status" value="1"/>
</dbReference>
<dbReference type="PANTHER" id="PTHR43408:SF2">
    <property type="entry name" value="FMN REDUCTASE (NADPH)"/>
    <property type="match status" value="1"/>
</dbReference>
<dbReference type="Pfam" id="PF03358">
    <property type="entry name" value="FMN_red"/>
    <property type="match status" value="1"/>
</dbReference>
<dbReference type="SUPFAM" id="SSF52218">
    <property type="entry name" value="Flavoproteins"/>
    <property type="match status" value="1"/>
</dbReference>
<reference key="1">
    <citation type="journal article" date="1999" name="J. Bacteriol.">
        <title>A novel reduced flavin mononucleotide-dependent methanesulfonate sulfonatase encoded by the sulfur-regulated msu operon of Pseudomonas aeruginosa.</title>
        <authorList>
            <person name="Kertesz M.A."/>
            <person name="Schmidt-Larbig K."/>
            <person name="Wueest T."/>
        </authorList>
    </citation>
    <scope>NUCLEOTIDE SEQUENCE [GENOMIC DNA]</scope>
    <source>
        <strain>ATCC 15692 / DSM 22644 / CIP 104116 / JCM 14847 / LMG 12228 / 1C / PRS 101 / PAO1</strain>
    </source>
</reference>
<reference key="2">
    <citation type="journal article" date="2000" name="Nature">
        <title>Complete genome sequence of Pseudomonas aeruginosa PAO1, an opportunistic pathogen.</title>
        <authorList>
            <person name="Stover C.K."/>
            <person name="Pham X.-Q.T."/>
            <person name="Erwin A.L."/>
            <person name="Mizoguchi S.D."/>
            <person name="Warrener P."/>
            <person name="Hickey M.J."/>
            <person name="Brinkman F.S.L."/>
            <person name="Hufnagle W.O."/>
            <person name="Kowalik D.J."/>
            <person name="Lagrou M."/>
            <person name="Garber R.L."/>
            <person name="Goltry L."/>
            <person name="Tolentino E."/>
            <person name="Westbrock-Wadman S."/>
            <person name="Yuan Y."/>
            <person name="Brody L.L."/>
            <person name="Coulter S.N."/>
            <person name="Folger K.R."/>
            <person name="Kas A."/>
            <person name="Larbig K."/>
            <person name="Lim R.M."/>
            <person name="Smith K.A."/>
            <person name="Spencer D.H."/>
            <person name="Wong G.K.-S."/>
            <person name="Wu Z."/>
            <person name="Paulsen I.T."/>
            <person name="Reizer J."/>
            <person name="Saier M.H. Jr."/>
            <person name="Hancock R.E.W."/>
            <person name="Lory S."/>
            <person name="Olson M.V."/>
        </authorList>
    </citation>
    <scope>NUCLEOTIDE SEQUENCE [LARGE SCALE GENOMIC DNA]</scope>
    <source>
        <strain>ATCC 15692 / DSM 22644 / CIP 104116 / JCM 14847 / LMG 12228 / 1C / PRS 101 / PAO1</strain>
    </source>
</reference>